<protein>
    <recommendedName>
        <fullName evidence="1">Ribonuclease H</fullName>
        <shortName evidence="1">RNase H</shortName>
        <ecNumber evidence="1">3.1.26.4</ecNumber>
    </recommendedName>
</protein>
<organism>
    <name type="scientific">Acetivibrio thermocellus (strain ATCC 27405 / DSM 1237 / JCM 9322 / NBRC 103400 / NCIMB 10682 / NRRL B-4536 / VPI 7372)</name>
    <name type="common">Clostridium thermocellum</name>
    <dbReference type="NCBI Taxonomy" id="203119"/>
    <lineage>
        <taxon>Bacteria</taxon>
        <taxon>Bacillati</taxon>
        <taxon>Bacillota</taxon>
        <taxon>Clostridia</taxon>
        <taxon>Eubacteriales</taxon>
        <taxon>Oscillospiraceae</taxon>
        <taxon>Acetivibrio</taxon>
    </lineage>
</organism>
<dbReference type="EC" id="3.1.26.4" evidence="1"/>
<dbReference type="EMBL" id="CP000568">
    <property type="protein sequence ID" value="ABN51908.1"/>
    <property type="molecule type" value="Genomic_DNA"/>
</dbReference>
<dbReference type="RefSeq" id="WP_003516659.1">
    <property type="nucleotide sequence ID" value="NC_009012.1"/>
</dbReference>
<dbReference type="SMR" id="A3DD79"/>
<dbReference type="STRING" id="203119.Cthe_0673"/>
<dbReference type="GeneID" id="35804764"/>
<dbReference type="KEGG" id="cth:Cthe_0673"/>
<dbReference type="eggNOG" id="COG0328">
    <property type="taxonomic scope" value="Bacteria"/>
</dbReference>
<dbReference type="HOGENOM" id="CLU_030894_6_2_9"/>
<dbReference type="OrthoDB" id="7845843at2"/>
<dbReference type="Proteomes" id="UP000002145">
    <property type="component" value="Chromosome"/>
</dbReference>
<dbReference type="GO" id="GO:0005737">
    <property type="term" value="C:cytoplasm"/>
    <property type="evidence" value="ECO:0007669"/>
    <property type="project" value="UniProtKB-SubCell"/>
</dbReference>
<dbReference type="GO" id="GO:0000287">
    <property type="term" value="F:magnesium ion binding"/>
    <property type="evidence" value="ECO:0007669"/>
    <property type="project" value="UniProtKB-UniRule"/>
</dbReference>
<dbReference type="GO" id="GO:0003676">
    <property type="term" value="F:nucleic acid binding"/>
    <property type="evidence" value="ECO:0007669"/>
    <property type="project" value="InterPro"/>
</dbReference>
<dbReference type="GO" id="GO:0004523">
    <property type="term" value="F:RNA-DNA hybrid ribonuclease activity"/>
    <property type="evidence" value="ECO:0007669"/>
    <property type="project" value="UniProtKB-UniRule"/>
</dbReference>
<dbReference type="GO" id="GO:0043137">
    <property type="term" value="P:DNA replication, removal of RNA primer"/>
    <property type="evidence" value="ECO:0007669"/>
    <property type="project" value="TreeGrafter"/>
</dbReference>
<dbReference type="CDD" id="cd09278">
    <property type="entry name" value="RNase_HI_prokaryote_like"/>
    <property type="match status" value="1"/>
</dbReference>
<dbReference type="FunFam" id="3.30.420.10:FF:000089">
    <property type="entry name" value="Ribonuclease H"/>
    <property type="match status" value="1"/>
</dbReference>
<dbReference type="Gene3D" id="3.30.420.10">
    <property type="entry name" value="Ribonuclease H-like superfamily/Ribonuclease H"/>
    <property type="match status" value="1"/>
</dbReference>
<dbReference type="HAMAP" id="MF_00042">
    <property type="entry name" value="RNase_H"/>
    <property type="match status" value="1"/>
</dbReference>
<dbReference type="InterPro" id="IPR050092">
    <property type="entry name" value="RNase_H"/>
</dbReference>
<dbReference type="InterPro" id="IPR012337">
    <property type="entry name" value="RNaseH-like_sf"/>
</dbReference>
<dbReference type="InterPro" id="IPR002156">
    <property type="entry name" value="RNaseH_domain"/>
</dbReference>
<dbReference type="InterPro" id="IPR036397">
    <property type="entry name" value="RNaseH_sf"/>
</dbReference>
<dbReference type="InterPro" id="IPR022892">
    <property type="entry name" value="RNaseHI"/>
</dbReference>
<dbReference type="NCBIfam" id="NF001236">
    <property type="entry name" value="PRK00203.1"/>
    <property type="match status" value="1"/>
</dbReference>
<dbReference type="PANTHER" id="PTHR10642">
    <property type="entry name" value="RIBONUCLEASE H1"/>
    <property type="match status" value="1"/>
</dbReference>
<dbReference type="PANTHER" id="PTHR10642:SF26">
    <property type="entry name" value="RIBONUCLEASE H1"/>
    <property type="match status" value="1"/>
</dbReference>
<dbReference type="Pfam" id="PF00075">
    <property type="entry name" value="RNase_H"/>
    <property type="match status" value="1"/>
</dbReference>
<dbReference type="SUPFAM" id="SSF53098">
    <property type="entry name" value="Ribonuclease H-like"/>
    <property type="match status" value="1"/>
</dbReference>
<dbReference type="PROSITE" id="PS50879">
    <property type="entry name" value="RNASE_H_1"/>
    <property type="match status" value="1"/>
</dbReference>
<comment type="function">
    <text evidence="1">Endonuclease that specifically degrades the RNA of RNA-DNA hybrids.</text>
</comment>
<comment type="catalytic activity">
    <reaction evidence="1">
        <text>Endonucleolytic cleavage to 5'-phosphomonoester.</text>
        <dbReference type="EC" id="3.1.26.4"/>
    </reaction>
</comment>
<comment type="cofactor">
    <cofactor evidence="1">
        <name>Mg(2+)</name>
        <dbReference type="ChEBI" id="CHEBI:18420"/>
    </cofactor>
    <text evidence="1">Binds 1 Mg(2+) ion per subunit. May bind a second metal ion at a regulatory site, or after substrate binding.</text>
</comment>
<comment type="subunit">
    <text evidence="1">Monomer.</text>
</comment>
<comment type="subcellular location">
    <subcellularLocation>
        <location evidence="1">Cytoplasm</location>
    </subcellularLocation>
</comment>
<comment type="similarity">
    <text evidence="1">Belongs to the RNase H family.</text>
</comment>
<feature type="chain" id="PRO_0000332583" description="Ribonuclease H">
    <location>
        <begin position="1"/>
        <end position="147"/>
    </location>
</feature>
<feature type="domain" description="RNase H type-1" evidence="2">
    <location>
        <begin position="1"/>
        <end position="142"/>
    </location>
</feature>
<feature type="binding site" evidence="1">
    <location>
        <position position="9"/>
    </location>
    <ligand>
        <name>Mg(2+)</name>
        <dbReference type="ChEBI" id="CHEBI:18420"/>
        <label>1</label>
    </ligand>
</feature>
<feature type="binding site" evidence="1">
    <location>
        <position position="9"/>
    </location>
    <ligand>
        <name>Mg(2+)</name>
        <dbReference type="ChEBI" id="CHEBI:18420"/>
        <label>2</label>
    </ligand>
</feature>
<feature type="binding site" evidence="1">
    <location>
        <position position="47"/>
    </location>
    <ligand>
        <name>Mg(2+)</name>
        <dbReference type="ChEBI" id="CHEBI:18420"/>
        <label>1</label>
    </ligand>
</feature>
<feature type="binding site" evidence="1">
    <location>
        <position position="69"/>
    </location>
    <ligand>
        <name>Mg(2+)</name>
        <dbReference type="ChEBI" id="CHEBI:18420"/>
        <label>1</label>
    </ligand>
</feature>
<feature type="binding site" evidence="1">
    <location>
        <position position="134"/>
    </location>
    <ligand>
        <name>Mg(2+)</name>
        <dbReference type="ChEBI" id="CHEBI:18420"/>
        <label>2</label>
    </ligand>
</feature>
<evidence type="ECO:0000255" key="1">
    <source>
        <dbReference type="HAMAP-Rule" id="MF_00042"/>
    </source>
</evidence>
<evidence type="ECO:0000255" key="2">
    <source>
        <dbReference type="PROSITE-ProRule" id="PRU00408"/>
    </source>
</evidence>
<reference key="1">
    <citation type="submission" date="2007-02" db="EMBL/GenBank/DDBJ databases">
        <title>Complete sequence of Clostridium thermocellum ATCC 27405.</title>
        <authorList>
            <consortium name="US DOE Joint Genome Institute"/>
            <person name="Copeland A."/>
            <person name="Lucas S."/>
            <person name="Lapidus A."/>
            <person name="Barry K."/>
            <person name="Detter J.C."/>
            <person name="Glavina del Rio T."/>
            <person name="Hammon N."/>
            <person name="Israni S."/>
            <person name="Dalin E."/>
            <person name="Tice H."/>
            <person name="Pitluck S."/>
            <person name="Chertkov O."/>
            <person name="Brettin T."/>
            <person name="Bruce D."/>
            <person name="Han C."/>
            <person name="Tapia R."/>
            <person name="Gilna P."/>
            <person name="Schmutz J."/>
            <person name="Larimer F."/>
            <person name="Land M."/>
            <person name="Hauser L."/>
            <person name="Kyrpides N."/>
            <person name="Mikhailova N."/>
            <person name="Wu J.H.D."/>
            <person name="Newcomb M."/>
            <person name="Richardson P."/>
        </authorList>
    </citation>
    <scope>NUCLEOTIDE SEQUENCE [LARGE SCALE GENOMIC DNA]</scope>
    <source>
        <strain>ATCC 27405 / DSM 1237 / JCM 9322 / NBRC 103400 / NCIMB 10682 / NRRL B-4536 / VPI 7372</strain>
    </source>
</reference>
<name>RNH_ACET2</name>
<keyword id="KW-0963">Cytoplasm</keyword>
<keyword id="KW-0255">Endonuclease</keyword>
<keyword id="KW-0378">Hydrolase</keyword>
<keyword id="KW-0460">Magnesium</keyword>
<keyword id="KW-0479">Metal-binding</keyword>
<keyword id="KW-0540">Nuclease</keyword>
<keyword id="KW-1185">Reference proteome</keyword>
<gene>
    <name evidence="1" type="primary">rnhA</name>
    <name type="ordered locus">Cthe_0673</name>
</gene>
<proteinExistence type="inferred from homology"/>
<accession>A3DD79</accession>
<sequence>MKKVSIYTDGACSGNPGDGGWGAILIYGNHEKEVSGFEKDTTNNRMELVAAINALKMLKEPCEVDLYSDSAYLVNGFLQNWVEKWKKNGWKTSNKEEVKNMELWQELDRLSNIHKIRWIKVKGHSDNEYNNRCDKLATDEIKKNSKK</sequence>